<name>SAT_DESDA</name>
<keyword id="KW-0067">ATP-binding</keyword>
<keyword id="KW-0547">Nucleotide-binding</keyword>
<keyword id="KW-0548">Nucleotidyltransferase</keyword>
<keyword id="KW-0808">Transferase</keyword>
<evidence type="ECO:0000255" key="1">
    <source>
        <dbReference type="HAMAP-Rule" id="MF_00066"/>
    </source>
</evidence>
<protein>
    <recommendedName>
        <fullName evidence="1">Sulfate adenylyltransferase</fullName>
        <ecNumber evidence="1">2.7.7.4</ecNumber>
    </recommendedName>
    <alternativeName>
        <fullName evidence="1">ATP-sulfurylase</fullName>
    </alternativeName>
    <alternativeName>
        <fullName evidence="1">Sulfate adenylate transferase</fullName>
        <shortName evidence="1">SAT</shortName>
    </alternativeName>
</protein>
<proteinExistence type="inferred from homology"/>
<comment type="catalytic activity">
    <reaction evidence="1">
        <text>sulfate + ATP + H(+) = adenosine 5'-phosphosulfate + diphosphate</text>
        <dbReference type="Rhea" id="RHEA:18133"/>
        <dbReference type="ChEBI" id="CHEBI:15378"/>
        <dbReference type="ChEBI" id="CHEBI:16189"/>
        <dbReference type="ChEBI" id="CHEBI:30616"/>
        <dbReference type="ChEBI" id="CHEBI:33019"/>
        <dbReference type="ChEBI" id="CHEBI:58243"/>
        <dbReference type="EC" id="2.7.7.4"/>
    </reaction>
</comment>
<comment type="pathway">
    <text evidence="1">Sulfur metabolism; hydrogen sulfide biosynthesis; sulfite from sulfate: step 1/3.</text>
</comment>
<comment type="similarity">
    <text evidence="1">Belongs to the sulfate adenylyltransferase family.</text>
</comment>
<sequence length="423" mass="46912">MSKLVAPHGGKGLVCCLLEGKALEDEKKKAAGLKQIEISSRAKGDLIMMGIGGFSPLNGFMNKADWKSVCEKMTLTDGTFWPVPVTLDVSAAEAKSIKAGEEVALVRKGEVMATMKVEEIYEMTEADKKMECELVFKGEGPDSEKFWEVAPEDHPGVKMVLAQKEYNIAGPVKVLSQGEFPEKFPGVYMTPAQLRAKMDERGWQKVAALQLRNPMHRSHEYLAKIGVEVCDGVVIHSLVGSLKPGDIPAEVRVKCIDTLVDKYFVKDFVIQAGYPLDMRYAGPREALLHATFRQNYGINNLLVGRDHAGVGDFYGMFEAQEIFRKMPTPADSGKRLLCEPLNIDWTFYCKKCDGMASMRTCPHGKEDRVILSGTKLRKMLSEGADVPDHFGRDEVLAILREYYSGLTEKVEVKMQRAASGSTM</sequence>
<organism>
    <name type="scientific">Desulfovibrio desulfuricans (strain ATCC 27774 / DSM 6949 / MB)</name>
    <dbReference type="NCBI Taxonomy" id="525146"/>
    <lineage>
        <taxon>Bacteria</taxon>
        <taxon>Pseudomonadati</taxon>
        <taxon>Thermodesulfobacteriota</taxon>
        <taxon>Desulfovibrionia</taxon>
        <taxon>Desulfovibrionales</taxon>
        <taxon>Desulfovibrionaceae</taxon>
        <taxon>Desulfovibrio</taxon>
    </lineage>
</organism>
<feature type="chain" id="PRO_1000117966" description="Sulfate adenylyltransferase">
    <location>
        <begin position="1"/>
        <end position="423"/>
    </location>
</feature>
<gene>
    <name evidence="1" type="primary">sat</name>
    <name type="ordered locus">Ddes_0454</name>
</gene>
<dbReference type="EC" id="2.7.7.4" evidence="1"/>
<dbReference type="EMBL" id="CP001358">
    <property type="protein sequence ID" value="ACL48366.1"/>
    <property type="molecule type" value="Genomic_DNA"/>
</dbReference>
<dbReference type="SMR" id="B8J4A8"/>
<dbReference type="STRING" id="525146.Ddes_0454"/>
<dbReference type="KEGG" id="dds:Ddes_0454"/>
<dbReference type="eggNOG" id="COG2046">
    <property type="taxonomic scope" value="Bacteria"/>
</dbReference>
<dbReference type="HOGENOM" id="CLU_022950_1_1_7"/>
<dbReference type="UniPathway" id="UPA00140">
    <property type="reaction ID" value="UER00204"/>
</dbReference>
<dbReference type="GO" id="GO:0005524">
    <property type="term" value="F:ATP binding"/>
    <property type="evidence" value="ECO:0007669"/>
    <property type="project" value="UniProtKB-KW"/>
</dbReference>
<dbReference type="GO" id="GO:0004781">
    <property type="term" value="F:sulfate adenylyltransferase (ATP) activity"/>
    <property type="evidence" value="ECO:0007669"/>
    <property type="project" value="UniProtKB-UniRule"/>
</dbReference>
<dbReference type="GO" id="GO:0070814">
    <property type="term" value="P:hydrogen sulfide biosynthetic process"/>
    <property type="evidence" value="ECO:0007669"/>
    <property type="project" value="UniProtKB-UniRule"/>
</dbReference>
<dbReference type="GO" id="GO:0000103">
    <property type="term" value="P:sulfate assimilation"/>
    <property type="evidence" value="ECO:0007669"/>
    <property type="project" value="UniProtKB-UniRule"/>
</dbReference>
<dbReference type="CDD" id="cd00517">
    <property type="entry name" value="ATPS"/>
    <property type="match status" value="1"/>
</dbReference>
<dbReference type="Gene3D" id="3.40.50.620">
    <property type="entry name" value="HUPs"/>
    <property type="match status" value="1"/>
</dbReference>
<dbReference type="Gene3D" id="3.10.400.10">
    <property type="entry name" value="Sulfate adenylyltransferase"/>
    <property type="match status" value="1"/>
</dbReference>
<dbReference type="HAMAP" id="MF_00066">
    <property type="entry name" value="Sulf_adenylyltr"/>
    <property type="match status" value="1"/>
</dbReference>
<dbReference type="InterPro" id="IPR025980">
    <property type="entry name" value="ATP-Sase_PUA-like_dom"/>
</dbReference>
<dbReference type="InterPro" id="IPR015947">
    <property type="entry name" value="PUA-like_sf"/>
</dbReference>
<dbReference type="InterPro" id="IPR014729">
    <property type="entry name" value="Rossmann-like_a/b/a_fold"/>
</dbReference>
<dbReference type="InterPro" id="IPR020792">
    <property type="entry name" value="SO4_adenylyltransferase_pro"/>
</dbReference>
<dbReference type="InterPro" id="IPR024951">
    <property type="entry name" value="Sulfurylase_cat_dom"/>
</dbReference>
<dbReference type="InterPro" id="IPR002650">
    <property type="entry name" value="Sulphate_adenylyltransferase"/>
</dbReference>
<dbReference type="NCBIfam" id="NF003166">
    <property type="entry name" value="PRK04149.1"/>
    <property type="match status" value="1"/>
</dbReference>
<dbReference type="NCBIfam" id="TIGR00339">
    <property type="entry name" value="sopT"/>
    <property type="match status" value="1"/>
</dbReference>
<dbReference type="PANTHER" id="PTHR43509">
    <property type="match status" value="1"/>
</dbReference>
<dbReference type="PANTHER" id="PTHR43509:SF1">
    <property type="entry name" value="SULFATE ADENYLYLTRANSFERASE"/>
    <property type="match status" value="1"/>
</dbReference>
<dbReference type="Pfam" id="PF01747">
    <property type="entry name" value="ATP-sulfurylase"/>
    <property type="match status" value="1"/>
</dbReference>
<dbReference type="Pfam" id="PF14306">
    <property type="entry name" value="PUA_2"/>
    <property type="match status" value="1"/>
</dbReference>
<dbReference type="SUPFAM" id="SSF52374">
    <property type="entry name" value="Nucleotidylyl transferase"/>
    <property type="match status" value="1"/>
</dbReference>
<dbReference type="SUPFAM" id="SSF88697">
    <property type="entry name" value="PUA domain-like"/>
    <property type="match status" value="1"/>
</dbReference>
<reference key="1">
    <citation type="submission" date="2009-01" db="EMBL/GenBank/DDBJ databases">
        <title>Complete sequence of Desulfovibrio desulfuricans subsp. desulfuricans str. ATCC 27774.</title>
        <authorList>
            <consortium name="US DOE Joint Genome Institute"/>
            <person name="Lucas S."/>
            <person name="Copeland A."/>
            <person name="Lapidus A."/>
            <person name="Glavina del Rio T."/>
            <person name="Tice H."/>
            <person name="Bruce D."/>
            <person name="Goodwin L."/>
            <person name="Pitluck S."/>
            <person name="Sims D."/>
            <person name="Lu M."/>
            <person name="Kiss H."/>
            <person name="Meineke L."/>
            <person name="Brettin T."/>
            <person name="Detter J.C."/>
            <person name="Han C."/>
            <person name="Larimer F."/>
            <person name="Land M."/>
            <person name="Hauser L."/>
            <person name="Kyrpides N."/>
            <person name="Ovchinnikova G."/>
            <person name="Hazen T.C."/>
        </authorList>
    </citation>
    <scope>NUCLEOTIDE SEQUENCE [LARGE SCALE GENOMIC DNA]</scope>
    <source>
        <strain>ATCC 27774 / DSM 6949 / MB</strain>
    </source>
</reference>
<accession>B8J4A8</accession>